<gene>
    <name type="primary">trkA</name>
    <name type="ordered locus">HI_0625</name>
</gene>
<reference key="1">
    <citation type="journal article" date="1995" name="Science">
        <title>Whole-genome random sequencing and assembly of Haemophilus influenzae Rd.</title>
        <authorList>
            <person name="Fleischmann R.D."/>
            <person name="Adams M.D."/>
            <person name="White O."/>
            <person name="Clayton R.A."/>
            <person name="Kirkness E.F."/>
            <person name="Kerlavage A.R."/>
            <person name="Bult C.J."/>
            <person name="Tomb J.-F."/>
            <person name="Dougherty B.A."/>
            <person name="Merrick J.M."/>
            <person name="McKenney K."/>
            <person name="Sutton G.G."/>
            <person name="FitzHugh W."/>
            <person name="Fields C.A."/>
            <person name="Gocayne J.D."/>
            <person name="Scott J.D."/>
            <person name="Shirley R."/>
            <person name="Liu L.-I."/>
            <person name="Glodek A."/>
            <person name="Kelley J.M."/>
            <person name="Weidman J.F."/>
            <person name="Phillips C.A."/>
            <person name="Spriggs T."/>
            <person name="Hedblom E."/>
            <person name="Cotton M.D."/>
            <person name="Utterback T.R."/>
            <person name="Hanna M.C."/>
            <person name="Nguyen D.T."/>
            <person name="Saudek D.M."/>
            <person name="Brandon R.C."/>
            <person name="Fine L.D."/>
            <person name="Fritchman J.L."/>
            <person name="Fuhrmann J.L."/>
            <person name="Geoghagen N.S.M."/>
            <person name="Gnehm C.L."/>
            <person name="McDonald L.A."/>
            <person name="Small K.V."/>
            <person name="Fraser C.M."/>
            <person name="Smith H.O."/>
            <person name="Venter J.C."/>
        </authorList>
    </citation>
    <scope>NUCLEOTIDE SEQUENCE [LARGE SCALE GENOMIC DNA]</scope>
    <source>
        <strain>ATCC 51907 / DSM 11121 / KW20 / Rd</strain>
    </source>
</reference>
<dbReference type="EMBL" id="L42023">
    <property type="protein sequence ID" value="AAC22285.1"/>
    <property type="molecule type" value="Genomic_DNA"/>
</dbReference>
<dbReference type="RefSeq" id="NP_438785.1">
    <property type="nucleotide sequence ID" value="NC_000907.1"/>
</dbReference>
<dbReference type="SMR" id="P71354"/>
<dbReference type="STRING" id="71421.HI_0625"/>
<dbReference type="EnsemblBacteria" id="AAC22285">
    <property type="protein sequence ID" value="AAC22285"/>
    <property type="gene ID" value="HI_0625"/>
</dbReference>
<dbReference type="KEGG" id="hin:HI_0625"/>
<dbReference type="PATRIC" id="fig|71421.8.peg.651"/>
<dbReference type="eggNOG" id="COG0569">
    <property type="taxonomic scope" value="Bacteria"/>
</dbReference>
<dbReference type="HOGENOM" id="CLU_046525_0_2_6"/>
<dbReference type="OrthoDB" id="9775180at2"/>
<dbReference type="PhylomeDB" id="P71354"/>
<dbReference type="BioCyc" id="HINF71421:G1GJ1-652-MONOMER"/>
<dbReference type="Proteomes" id="UP000000579">
    <property type="component" value="Chromosome"/>
</dbReference>
<dbReference type="GO" id="GO:0005886">
    <property type="term" value="C:plasma membrane"/>
    <property type="evidence" value="ECO:0007669"/>
    <property type="project" value="InterPro"/>
</dbReference>
<dbReference type="GO" id="GO:0015079">
    <property type="term" value="F:potassium ion transmembrane transporter activity"/>
    <property type="evidence" value="ECO:0007669"/>
    <property type="project" value="InterPro"/>
</dbReference>
<dbReference type="GO" id="GO:0006813">
    <property type="term" value="P:potassium ion transport"/>
    <property type="evidence" value="ECO:0000318"/>
    <property type="project" value="GO_Central"/>
</dbReference>
<dbReference type="FunFam" id="3.30.70.1450:FF:000001">
    <property type="entry name" value="Trk system potassium transporter TrkA"/>
    <property type="match status" value="1"/>
</dbReference>
<dbReference type="FunFam" id="3.40.50.720:FF:000027">
    <property type="entry name" value="Trk system potassium transporter TrkA"/>
    <property type="match status" value="1"/>
</dbReference>
<dbReference type="FunFam" id="3.40.50.720:FF:000042">
    <property type="entry name" value="Trk system potassium transporter TrkA"/>
    <property type="match status" value="1"/>
</dbReference>
<dbReference type="Gene3D" id="3.40.50.720">
    <property type="entry name" value="NAD(P)-binding Rossmann-like Domain"/>
    <property type="match status" value="2"/>
</dbReference>
<dbReference type="Gene3D" id="3.30.70.1450">
    <property type="entry name" value="Regulator of K+ conductance, C-terminal domain"/>
    <property type="match status" value="2"/>
</dbReference>
<dbReference type="InterPro" id="IPR006036">
    <property type="entry name" value="K_uptake_TrkA"/>
</dbReference>
<dbReference type="InterPro" id="IPR036291">
    <property type="entry name" value="NAD(P)-bd_dom_sf"/>
</dbReference>
<dbReference type="InterPro" id="IPR006037">
    <property type="entry name" value="RCK_C"/>
</dbReference>
<dbReference type="InterPro" id="IPR036721">
    <property type="entry name" value="RCK_C_sf"/>
</dbReference>
<dbReference type="InterPro" id="IPR003148">
    <property type="entry name" value="RCK_N"/>
</dbReference>
<dbReference type="InterPro" id="IPR050721">
    <property type="entry name" value="Trk_Ktr_HKT_K-transport"/>
</dbReference>
<dbReference type="NCBIfam" id="NF007030">
    <property type="entry name" value="PRK09496.1-1"/>
    <property type="match status" value="1"/>
</dbReference>
<dbReference type="NCBIfam" id="NF007031">
    <property type="entry name" value="PRK09496.1-2"/>
    <property type="match status" value="1"/>
</dbReference>
<dbReference type="NCBIfam" id="NF007032">
    <property type="entry name" value="PRK09496.1-4"/>
    <property type="match status" value="1"/>
</dbReference>
<dbReference type="NCBIfam" id="NF007039">
    <property type="entry name" value="PRK09496.3-2"/>
    <property type="match status" value="1"/>
</dbReference>
<dbReference type="PANTHER" id="PTHR43833">
    <property type="entry name" value="POTASSIUM CHANNEL PROTEIN 2-RELATED-RELATED"/>
    <property type="match status" value="1"/>
</dbReference>
<dbReference type="PANTHER" id="PTHR43833:SF5">
    <property type="entry name" value="TRK SYSTEM POTASSIUM UPTAKE PROTEIN TRKA"/>
    <property type="match status" value="1"/>
</dbReference>
<dbReference type="Pfam" id="PF02080">
    <property type="entry name" value="TrkA_C"/>
    <property type="match status" value="2"/>
</dbReference>
<dbReference type="Pfam" id="PF02254">
    <property type="entry name" value="TrkA_N"/>
    <property type="match status" value="2"/>
</dbReference>
<dbReference type="PRINTS" id="PR00335">
    <property type="entry name" value="KUPTAKETRKA"/>
</dbReference>
<dbReference type="SUPFAM" id="SSF51735">
    <property type="entry name" value="NAD(P)-binding Rossmann-fold domains"/>
    <property type="match status" value="2"/>
</dbReference>
<dbReference type="SUPFAM" id="SSF116726">
    <property type="entry name" value="TrkA C-terminal domain-like"/>
    <property type="match status" value="2"/>
</dbReference>
<dbReference type="PROSITE" id="PS51202">
    <property type="entry name" value="RCK_C"/>
    <property type="match status" value="2"/>
</dbReference>
<dbReference type="PROSITE" id="PS51201">
    <property type="entry name" value="RCK_N"/>
    <property type="match status" value="2"/>
</dbReference>
<evidence type="ECO:0000250" key="1"/>
<evidence type="ECO:0000255" key="2"/>
<evidence type="ECO:0000255" key="3">
    <source>
        <dbReference type="PROSITE-ProRule" id="PRU00543"/>
    </source>
</evidence>
<evidence type="ECO:0000255" key="4">
    <source>
        <dbReference type="PROSITE-ProRule" id="PRU00544"/>
    </source>
</evidence>
<organism>
    <name type="scientific">Haemophilus influenzae (strain ATCC 51907 / DSM 11121 / KW20 / Rd)</name>
    <dbReference type="NCBI Taxonomy" id="71421"/>
    <lineage>
        <taxon>Bacteria</taxon>
        <taxon>Pseudomonadati</taxon>
        <taxon>Pseudomonadota</taxon>
        <taxon>Gammaproteobacteria</taxon>
        <taxon>Pasteurellales</taxon>
        <taxon>Pasteurellaceae</taxon>
        <taxon>Haemophilus</taxon>
    </lineage>
</organism>
<keyword id="KW-0406">Ion transport</keyword>
<keyword id="KW-0520">NAD</keyword>
<keyword id="KW-0630">Potassium</keyword>
<keyword id="KW-0633">Potassium transport</keyword>
<keyword id="KW-1185">Reference proteome</keyword>
<keyword id="KW-0677">Repeat</keyword>
<keyword id="KW-0813">Transport</keyword>
<protein>
    <recommendedName>
        <fullName>Trk system potassium uptake protein TrkA</fullName>
        <shortName>K(+)-uptake protein TrkA</shortName>
    </recommendedName>
</protein>
<name>TRKA_HAEIN</name>
<sequence length="458" mass="50174">MKIIILGAGQVGTTLAENLVSEDNDITLVDNESPQLQTLQEKHDLRVVQGSPSSPKVLRDAGAADADLMVAVTASDEINMVACQMGYTLFNTPTRIARIRNSEYLREKDKLFNNENIPIDHLISPENLVTDEITRLIAYPGALQVAHFANNRISIVVVKAYYGGALVGYALSAFREHMPHIDCRIMSILRNGKPIRPQGSTIVEAGDEITFICATEHIKAIMGELQRLEKPYKRVMIVGGGNVAFGVAKRLENSCTVKLIERDSNRAQALAEKLPKTLVFNGDASDQNLLFEEHIESVDVFLSLSSDDEANIMSALLAKRLGAKKAMVLIQRIAYINLIQGGTIDIAVSPQQVTISALLGHVRKGDVKNVATLRHGIAEAIEIVAHGNVNTSNIVGRKIGELRLPMGIIIGALLRGNDVIIARRQVIIEEGDHIVIYLSDKKNVPEIEKLFQPSAFFI</sequence>
<proteinExistence type="inferred from homology"/>
<comment type="function">
    <text evidence="1">Part of a potassium transport system.</text>
</comment>
<comment type="domain">
    <text evidence="1">The RCK N-terminal domain binds NAD and possibly other effectors. This is expected to cause a conformation change that regulates potassium transport (By similarity).</text>
</comment>
<accession>P71354</accession>
<feature type="chain" id="PRO_0000148715" description="Trk system potassium uptake protein TrkA">
    <location>
        <begin position="1"/>
        <end position="458"/>
    </location>
</feature>
<feature type="domain" description="RCK N-terminal 1" evidence="3">
    <location>
        <begin position="1"/>
        <end position="123"/>
    </location>
</feature>
<feature type="domain" description="RCK C-terminal 1" evidence="4">
    <location>
        <begin position="143"/>
        <end position="227"/>
    </location>
</feature>
<feature type="domain" description="RCK N-terminal 2" evidence="3">
    <location>
        <begin position="232"/>
        <end position="348"/>
    </location>
</feature>
<feature type="domain" description="RCK C-terminal 2" evidence="4">
    <location>
        <begin position="368"/>
        <end position="453"/>
    </location>
</feature>
<feature type="binding site" description="in other chain" evidence="1">
    <location>
        <begin position="7"/>
        <end position="11"/>
    </location>
    <ligand>
        <name>NAD(+)</name>
        <dbReference type="ChEBI" id="CHEBI:57540"/>
        <label>1</label>
        <note>ligand shared between dimeric partners</note>
    </ligand>
</feature>
<feature type="binding site" description="in other chain" evidence="1">
    <location>
        <position position="30"/>
    </location>
    <ligand>
        <name>NAD(+)</name>
        <dbReference type="ChEBI" id="CHEBI:57540"/>
        <label>1</label>
        <note>ligand shared between dimeric partners</note>
    </ligand>
</feature>
<feature type="binding site" description="in other chain" evidence="1">
    <location>
        <begin position="73"/>
        <end position="74"/>
    </location>
    <ligand>
        <name>NAD(+)</name>
        <dbReference type="ChEBI" id="CHEBI:57540"/>
        <label>1</label>
        <note>ligand shared between dimeric partners</note>
    </ligand>
</feature>
<feature type="binding site" evidence="1">
    <location>
        <position position="98"/>
    </location>
    <ligand>
        <name>NAD(+)</name>
        <dbReference type="ChEBI" id="CHEBI:57540"/>
        <label>1</label>
        <note>ligand shared between dimeric partners</note>
    </ligand>
</feature>
<feature type="binding site" evidence="2">
    <location>
        <begin position="234"/>
        <end position="262"/>
    </location>
    <ligand>
        <name>NAD(+)</name>
        <dbReference type="ChEBI" id="CHEBI:57540"/>
        <label>2</label>
    </ligand>
</feature>